<reference key="1">
    <citation type="journal article" date="1993" name="J. Mol. Biol.">
        <title>The gene locus of the proton-translocating NADH: ubiquinone oxidoreductase in Escherichia coli. Organization of the 14 genes and relationship between the derived proteins and subunits of mitochondrial complex I.</title>
        <authorList>
            <person name="Weidner U."/>
            <person name="Geier S."/>
            <person name="Ptock A."/>
            <person name="Friedrich T."/>
            <person name="Leif H."/>
            <person name="Weiss H."/>
        </authorList>
    </citation>
    <scope>NUCLEOTIDE SEQUENCE [GENOMIC DNA]</scope>
    <source>
        <strain>K12 / AN387</strain>
    </source>
</reference>
<reference key="2">
    <citation type="journal article" date="1997" name="DNA Res.">
        <title>Construction of a contiguous 874-kb sequence of the Escherichia coli-K12 genome corresponding to 50.0-68.8 min on the linkage map and analysis of its sequence features.</title>
        <authorList>
            <person name="Yamamoto Y."/>
            <person name="Aiba H."/>
            <person name="Baba T."/>
            <person name="Hayashi K."/>
            <person name="Inada T."/>
            <person name="Isono K."/>
            <person name="Itoh T."/>
            <person name="Kimura S."/>
            <person name="Kitagawa M."/>
            <person name="Makino K."/>
            <person name="Miki T."/>
            <person name="Mitsuhashi N."/>
            <person name="Mizobuchi K."/>
            <person name="Mori H."/>
            <person name="Nakade S."/>
            <person name="Nakamura Y."/>
            <person name="Nashimoto H."/>
            <person name="Oshima T."/>
            <person name="Oyama S."/>
            <person name="Saito N."/>
            <person name="Sampei G."/>
            <person name="Satoh Y."/>
            <person name="Sivasundaram S."/>
            <person name="Tagami H."/>
            <person name="Takahashi H."/>
            <person name="Takeda J."/>
            <person name="Takemoto K."/>
            <person name="Uehara K."/>
            <person name="Wada C."/>
            <person name="Yamagata S."/>
            <person name="Horiuchi T."/>
        </authorList>
    </citation>
    <scope>NUCLEOTIDE SEQUENCE [LARGE SCALE GENOMIC DNA]</scope>
    <source>
        <strain>K12 / W3110 / ATCC 27325 / DSM 5911</strain>
    </source>
</reference>
<reference key="3">
    <citation type="journal article" date="1997" name="Science">
        <title>The complete genome sequence of Escherichia coli K-12.</title>
        <authorList>
            <person name="Blattner F.R."/>
            <person name="Plunkett G. III"/>
            <person name="Bloch C.A."/>
            <person name="Perna N.T."/>
            <person name="Burland V."/>
            <person name="Riley M."/>
            <person name="Collado-Vides J."/>
            <person name="Glasner J.D."/>
            <person name="Rode C.K."/>
            <person name="Mayhew G.F."/>
            <person name="Gregor J."/>
            <person name="Davis N.W."/>
            <person name="Kirkpatrick H.A."/>
            <person name="Goeden M.A."/>
            <person name="Rose D.J."/>
            <person name="Mau B."/>
            <person name="Shao Y."/>
        </authorList>
    </citation>
    <scope>NUCLEOTIDE SEQUENCE [LARGE SCALE GENOMIC DNA]</scope>
    <source>
        <strain>K12 / MG1655 / ATCC 47076</strain>
    </source>
</reference>
<reference key="4">
    <citation type="journal article" date="2006" name="Mol. Syst. Biol.">
        <title>Highly accurate genome sequences of Escherichia coli K-12 strains MG1655 and W3110.</title>
        <authorList>
            <person name="Hayashi K."/>
            <person name="Morooka N."/>
            <person name="Yamamoto Y."/>
            <person name="Fujita K."/>
            <person name="Isono K."/>
            <person name="Choi S."/>
            <person name="Ohtsubo E."/>
            <person name="Baba T."/>
            <person name="Wanner B.L."/>
            <person name="Mori H."/>
            <person name="Horiuchi T."/>
        </authorList>
    </citation>
    <scope>NUCLEOTIDE SEQUENCE [LARGE SCALE GENOMIC DNA]</scope>
    <source>
        <strain>K12 / W3110 / ATCC 27325 / DSM 5911</strain>
    </source>
</reference>
<reference key="5">
    <citation type="journal article" date="2003" name="Biochemistry">
        <title>Mutagenesis of subunit N of the Escherichia coli complex I. Identification of the initiation codon and the sensitivity of mutants to decylubiquinone.</title>
        <authorList>
            <person name="Amarneh B."/>
            <person name="Vik S.B."/>
        </authorList>
    </citation>
    <scope>IDENTIFICATION OF START CODON</scope>
    <scope>MUTAGENESIS OF MET-1; LYS-158; LYS-217; HIS-224; LYS-247; GLY-391 AND LYS-395</scope>
    <scope>DISRUPTION PHENOTYPE</scope>
</reference>
<reference key="6">
    <citation type="journal article" date="2005" name="Science">
        <title>Global topology analysis of the Escherichia coli inner membrane proteome.</title>
        <authorList>
            <person name="Daley D.O."/>
            <person name="Rapp M."/>
            <person name="Granseth E."/>
            <person name="Melen K."/>
            <person name="Drew D."/>
            <person name="von Heijne G."/>
        </authorList>
    </citation>
    <scope>TOPOLOGY [LARGE SCALE ANALYSIS]</scope>
    <source>
        <strain>K12 / MG1655 / ATCC 47076</strain>
    </source>
</reference>
<keyword id="KW-0002">3D-structure</keyword>
<keyword id="KW-0997">Cell inner membrane</keyword>
<keyword id="KW-1003">Cell membrane</keyword>
<keyword id="KW-0472">Membrane</keyword>
<keyword id="KW-0520">NAD</keyword>
<keyword id="KW-0874">Quinone</keyword>
<keyword id="KW-1185">Reference proteome</keyword>
<keyword id="KW-1278">Translocase</keyword>
<keyword id="KW-0812">Transmembrane</keyword>
<keyword id="KW-1133">Transmembrane helix</keyword>
<keyword id="KW-0813">Transport</keyword>
<keyword id="KW-0830">Ubiquinone</keyword>
<feature type="chain" id="PRO_0000117688" description="NADH-quinone oxidoreductase subunit N">
    <location>
        <begin position="1"/>
        <end position="485"/>
    </location>
</feature>
<feature type="topological domain" description="Periplasmic" evidence="1">
    <location>
        <begin position="1"/>
        <end position="7"/>
    </location>
</feature>
<feature type="transmembrane region" description="Helical" evidence="2">
    <location>
        <begin position="8"/>
        <end position="28"/>
    </location>
</feature>
<feature type="topological domain" description="Cytoplasmic" evidence="1">
    <location>
        <begin position="29"/>
        <end position="34"/>
    </location>
</feature>
<feature type="transmembrane region" description="Helical" evidence="2">
    <location>
        <begin position="35"/>
        <end position="55"/>
    </location>
</feature>
<feature type="topological domain" description="Periplasmic" evidence="1">
    <location>
        <begin position="56"/>
        <end position="70"/>
    </location>
</feature>
<feature type="transmembrane region" description="Helical" evidence="2">
    <location>
        <begin position="71"/>
        <end position="91"/>
    </location>
</feature>
<feature type="topological domain" description="Cytoplasmic" evidence="1">
    <location>
        <begin position="92"/>
        <end position="104"/>
    </location>
</feature>
<feature type="transmembrane region" description="Helical" evidence="2">
    <location>
        <begin position="105"/>
        <end position="125"/>
    </location>
</feature>
<feature type="topological domain" description="Periplasmic" evidence="1">
    <location>
        <position position="126"/>
    </location>
</feature>
<feature type="transmembrane region" description="Helical" evidence="2">
    <location>
        <begin position="127"/>
        <end position="147"/>
    </location>
</feature>
<feature type="topological domain" description="Cytoplasmic" evidence="1">
    <location>
        <begin position="148"/>
        <end position="158"/>
    </location>
</feature>
<feature type="transmembrane region" description="Helical" evidence="2">
    <location>
        <begin position="159"/>
        <end position="179"/>
    </location>
</feature>
<feature type="topological domain" description="Periplasmic" evidence="1">
    <location>
        <begin position="180"/>
        <end position="202"/>
    </location>
</feature>
<feature type="transmembrane region" description="Helical" evidence="2">
    <location>
        <begin position="203"/>
        <end position="223"/>
    </location>
</feature>
<feature type="topological domain" description="Cytoplasmic" evidence="1">
    <location>
        <begin position="224"/>
        <end position="234"/>
    </location>
</feature>
<feature type="transmembrane region" description="Helical" evidence="2">
    <location>
        <begin position="235"/>
        <end position="255"/>
    </location>
</feature>
<feature type="topological domain" description="Periplasmic" evidence="1">
    <location>
        <begin position="256"/>
        <end position="270"/>
    </location>
</feature>
<feature type="transmembrane region" description="Helical" evidence="2">
    <location>
        <begin position="271"/>
        <end position="291"/>
    </location>
</feature>
<feature type="topological domain" description="Cytoplasmic" evidence="1">
    <location>
        <begin position="292"/>
        <end position="296"/>
    </location>
</feature>
<feature type="transmembrane region" description="Helical" evidence="2">
    <location>
        <begin position="297"/>
        <end position="317"/>
    </location>
</feature>
<feature type="topological domain" description="Periplasmic" evidence="1">
    <location>
        <begin position="318"/>
        <end position="325"/>
    </location>
</feature>
<feature type="transmembrane region" description="Helical" evidence="2">
    <location>
        <begin position="326"/>
        <end position="346"/>
    </location>
</feature>
<feature type="topological domain" description="Cytoplasmic" evidence="1">
    <location>
        <begin position="347"/>
        <end position="372"/>
    </location>
</feature>
<feature type="transmembrane region" description="Helical" evidence="2">
    <location>
        <begin position="373"/>
        <end position="393"/>
    </location>
</feature>
<feature type="topological domain" description="Periplasmic" evidence="1">
    <location>
        <begin position="394"/>
        <end position="407"/>
    </location>
</feature>
<feature type="transmembrane region" description="Helical" evidence="2">
    <location>
        <begin position="408"/>
        <end position="430"/>
    </location>
</feature>
<feature type="topological domain" description="Cytoplasmic" evidence="1">
    <location>
        <begin position="431"/>
        <end position="454"/>
    </location>
</feature>
<feature type="transmembrane region" description="Helical" evidence="2">
    <location>
        <begin position="455"/>
        <end position="475"/>
    </location>
</feature>
<feature type="topological domain" description="Periplasmic" evidence="1">
    <location>
        <begin position="476"/>
        <end position="485"/>
    </location>
</feature>
<feature type="mutagenesis site" description="Shows 20% of the wild-type rate of deamino-NADH oxidase." evidence="3">
    <original>M</original>
    <variation>H</variation>
    <location>
        <position position="1"/>
    </location>
</feature>
<feature type="mutagenesis site" description="Shows 50% of the wild-type rate of deamino-NADH oxidase. Inhibited by 30-50% upon addition of 0.25 mM of decylubiquinone." evidence="3">
    <original>K</original>
    <variation>C</variation>
    <location>
        <position position="158"/>
    </location>
</feature>
<feature type="mutagenesis site" description="Loss of activity." evidence="3">
    <original>K</original>
    <variation>C</variation>
    <location>
        <position position="217"/>
    </location>
</feature>
<feature type="mutagenesis site" description="Shows 40% of the wild-type rate of deamino-NADH oxidase." evidence="3">
    <original>K</original>
    <variation>R</variation>
    <location>
        <position position="217"/>
    </location>
</feature>
<feature type="mutagenesis site" description="Shows 40% of the wild-type rate of deamino-NADH oxidase. Inhibited by 20-30% upon addition of 0.25 mM of decylubiquinone." evidence="3">
    <original>H</original>
    <variation>K</variation>
    <location>
        <position position="224"/>
    </location>
</feature>
<feature type="mutagenesis site" description="Shows 7% of the wild-type rate of deamino-NADH oxidase." evidence="3">
    <original>K</original>
    <variation>C</variation>
    <location>
        <position position="247"/>
    </location>
</feature>
<feature type="mutagenesis site" description="Shows 90% of the wild-type rate of deamino-NADH oxidase." evidence="3">
    <original>G</original>
    <variation>S</variation>
    <location>
        <position position="391"/>
    </location>
</feature>
<feature type="mutagenesis site" description="Shows 5% of the wild-type rate of deamino-NADH oxidase." evidence="3">
    <original>K</original>
    <variation>C</variation>
    <location>
        <position position="395"/>
    </location>
</feature>
<feature type="mutagenesis site" description="Shows 30% of the wild-type rate of deamino-NADH oxidase." evidence="3">
    <original>K</original>
    <variation>R</variation>
    <location>
        <position position="395"/>
    </location>
</feature>
<feature type="sequence conflict" description="In Ref. 1; CAA48373." evidence="4" ref="1">
    <original>NHLA</original>
    <variation>TIWR</variation>
    <location>
        <begin position="123"/>
        <end position="126"/>
    </location>
</feature>
<feature type="sequence conflict" description="In Ref. 1; CAA48373." evidence="4" ref="1">
    <original>EP</original>
    <variation>DA</variation>
    <location>
        <begin position="200"/>
        <end position="201"/>
    </location>
</feature>
<feature type="sequence conflict" description="In Ref. 1; CAA48373." evidence="4" ref="1">
    <original>AIRVVLAIIA</original>
    <variation>QVRRGAGDYR</variation>
    <location>
        <begin position="268"/>
        <end position="277"/>
    </location>
</feature>
<feature type="helix" evidence="7">
    <location>
        <begin position="5"/>
        <end position="10"/>
    </location>
</feature>
<feature type="helix" evidence="7">
    <location>
        <begin position="12"/>
        <end position="30"/>
    </location>
</feature>
<feature type="helix" evidence="7">
    <location>
        <begin position="34"/>
        <end position="58"/>
    </location>
</feature>
<feature type="strand" evidence="7">
    <location>
        <begin position="61"/>
        <end position="63"/>
    </location>
</feature>
<feature type="turn" evidence="7">
    <location>
        <begin position="64"/>
        <end position="66"/>
    </location>
</feature>
<feature type="strand" evidence="7">
    <location>
        <begin position="67"/>
        <end position="70"/>
    </location>
</feature>
<feature type="helix" evidence="7">
    <location>
        <begin position="71"/>
        <end position="95"/>
    </location>
</feature>
<feature type="helix" evidence="7">
    <location>
        <begin position="104"/>
        <end position="121"/>
    </location>
</feature>
<feature type="helix" evidence="7">
    <location>
        <begin position="125"/>
        <end position="143"/>
    </location>
</feature>
<feature type="turn" evidence="7">
    <location>
        <begin position="144"/>
        <end position="148"/>
    </location>
</feature>
<feature type="helix" evidence="7">
    <location>
        <begin position="150"/>
        <end position="181"/>
    </location>
</feature>
<feature type="helix" evidence="7">
    <location>
        <begin position="186"/>
        <end position="188"/>
    </location>
</feature>
<feature type="turn" evidence="7">
    <location>
        <begin position="189"/>
        <end position="192"/>
    </location>
</feature>
<feature type="turn" evidence="8">
    <location>
        <begin position="195"/>
        <end position="198"/>
    </location>
</feature>
<feature type="helix" evidence="7">
    <location>
        <begin position="201"/>
        <end position="217"/>
    </location>
</feature>
<feature type="helix" evidence="5">
    <location>
        <begin position="221"/>
        <end position="225"/>
    </location>
</feature>
<feature type="helix" evidence="7">
    <location>
        <begin position="227"/>
        <end position="233"/>
    </location>
</feature>
<feature type="helix" evidence="7">
    <location>
        <begin position="236"/>
        <end position="260"/>
    </location>
</feature>
<feature type="helix" evidence="7">
    <location>
        <begin position="262"/>
        <end position="265"/>
    </location>
</feature>
<feature type="helix" evidence="7">
    <location>
        <begin position="267"/>
        <end position="287"/>
    </location>
</feature>
<feature type="turn" evidence="7">
    <location>
        <begin position="288"/>
        <end position="290"/>
    </location>
</feature>
<feature type="helix" evidence="7">
    <location>
        <begin position="294"/>
        <end position="314"/>
    </location>
</feature>
<feature type="turn" evidence="7">
    <location>
        <begin position="315"/>
        <end position="318"/>
    </location>
</feature>
<feature type="helix" evidence="7">
    <location>
        <begin position="322"/>
        <end position="347"/>
    </location>
</feature>
<feature type="strand" evidence="6">
    <location>
        <begin position="354"/>
        <end position="356"/>
    </location>
</feature>
<feature type="turn" evidence="7">
    <location>
        <begin position="359"/>
        <end position="361"/>
    </location>
</feature>
<feature type="helix" evidence="7">
    <location>
        <begin position="365"/>
        <end position="367"/>
    </location>
</feature>
<feature type="helix" evidence="7">
    <location>
        <begin position="370"/>
        <end position="383"/>
    </location>
</feature>
<feature type="strand" evidence="7">
    <location>
        <begin position="387"/>
        <end position="389"/>
    </location>
</feature>
<feature type="helix" evidence="7">
    <location>
        <begin position="390"/>
        <end position="404"/>
    </location>
</feature>
<feature type="helix" evidence="7">
    <location>
        <begin position="408"/>
        <end position="431"/>
    </location>
</feature>
<feature type="helix" evidence="7">
    <location>
        <begin position="448"/>
        <end position="469"/>
    </location>
</feature>
<feature type="helix" evidence="7">
    <location>
        <begin position="472"/>
        <end position="480"/>
    </location>
</feature>
<gene>
    <name evidence="2" type="primary">nuoN</name>
    <name type="ordered locus">b2276</name>
    <name type="ordered locus">JW2271</name>
</gene>
<name>NUON_ECOLI</name>
<sequence length="485" mass="52044">MTITPQNLIALLPLLIVGLTVVVVMLSIAWRRNHFLNATLSVIGLNAALVSLWFVGQAGAMDVTPLMRVDGFAMLYTGLVLLASLATCTFAYPWLEGYNDNKDEFYLLVLIAALGGILLANANHLASLFLGIELISLPLFGLVGYAFRQKRSLEASIKYTILSAAASSFLLFGMALVYAQSGDLSFVALGKNLGDGMLNEPLLLAGFGLMIVGLGFKLSLVPFHLWTPDVYQGAPAPVSTFLATASKIAIFGVVMRLFLYAPVGDSEAIRVVLAIIAFASIIFGNLMALSQTNIKRLLGYSSISHLGYLLVALIALQTGEMSMEAVGVYLAGYLFSSLGAFGVVSLMSSPYRGPDADSLFSYRGLFWHRPILAAVMTVMMLSLAGIPMTLGFIGKFYVLAVGVQAHLWWLVGAVVVGSAIGLYYYLRVAVSLYLHAPEQPGRDAPSNWQYSAGGIVVLISALLVLVLGVWPQPLISIVRLAMPLM</sequence>
<protein>
    <recommendedName>
        <fullName evidence="2">NADH-quinone oxidoreductase subunit N</fullName>
        <ecNumber evidence="2">7.1.1.-</ecNumber>
    </recommendedName>
    <alternativeName>
        <fullName evidence="2">NADH dehydrogenase I subunit N</fullName>
    </alternativeName>
    <alternativeName>
        <fullName evidence="2">NDH-1 subunit N</fullName>
    </alternativeName>
    <alternativeName>
        <fullName>NUO14</fullName>
    </alternativeName>
</protein>
<proteinExistence type="evidence at protein level"/>
<evidence type="ECO:0000255" key="1"/>
<evidence type="ECO:0000255" key="2">
    <source>
        <dbReference type="HAMAP-Rule" id="MF_00445"/>
    </source>
</evidence>
<evidence type="ECO:0000269" key="3">
    <source>
    </source>
</evidence>
<evidence type="ECO:0000305" key="4"/>
<evidence type="ECO:0007829" key="5">
    <source>
        <dbReference type="PDB" id="7NYR"/>
    </source>
</evidence>
<evidence type="ECO:0007829" key="6">
    <source>
        <dbReference type="PDB" id="7P7C"/>
    </source>
</evidence>
<evidence type="ECO:0007829" key="7">
    <source>
        <dbReference type="PDB" id="7Z7V"/>
    </source>
</evidence>
<evidence type="ECO:0007829" key="8">
    <source>
        <dbReference type="PDB" id="7ZC5"/>
    </source>
</evidence>
<dbReference type="EC" id="7.1.1.-" evidence="2"/>
<dbReference type="EMBL" id="X68301">
    <property type="protein sequence ID" value="CAA48373.1"/>
    <property type="status" value="ALT_INIT"/>
    <property type="molecule type" value="Genomic_DNA"/>
</dbReference>
<dbReference type="EMBL" id="U00096">
    <property type="protein sequence ID" value="AAC75336.2"/>
    <property type="molecule type" value="Genomic_DNA"/>
</dbReference>
<dbReference type="EMBL" id="AP009048">
    <property type="protein sequence ID" value="BAA16103.1"/>
    <property type="status" value="ALT_INIT"/>
    <property type="molecule type" value="Genomic_DNA"/>
</dbReference>
<dbReference type="PIR" id="B64999">
    <property type="entry name" value="B64999"/>
</dbReference>
<dbReference type="PIR" id="S38323">
    <property type="entry name" value="S38323"/>
</dbReference>
<dbReference type="RefSeq" id="NP_416779.2">
    <property type="nucleotide sequence ID" value="NC_000913.3"/>
</dbReference>
<dbReference type="RefSeq" id="WP_000156701.1">
    <property type="nucleotide sequence ID" value="NZ_SSZK01000006.1"/>
</dbReference>
<dbReference type="PDB" id="7NYH">
    <property type="method" value="EM"/>
    <property type="resolution" value="3.60 A"/>
    <property type="chains" value="N=1-485"/>
</dbReference>
<dbReference type="PDB" id="7NYR">
    <property type="method" value="EM"/>
    <property type="resolution" value="3.30 A"/>
    <property type="chains" value="N=1-485"/>
</dbReference>
<dbReference type="PDB" id="7NYU">
    <property type="method" value="EM"/>
    <property type="resolution" value="3.80 A"/>
    <property type="chains" value="N=1-485"/>
</dbReference>
<dbReference type="PDB" id="7NYV">
    <property type="method" value="EM"/>
    <property type="resolution" value="3.70 A"/>
    <property type="chains" value="N=1-485"/>
</dbReference>
<dbReference type="PDB" id="7P61">
    <property type="method" value="EM"/>
    <property type="resolution" value="3.20 A"/>
    <property type="chains" value="N=1-485"/>
</dbReference>
<dbReference type="PDB" id="7P62">
    <property type="method" value="EM"/>
    <property type="resolution" value="3.60 A"/>
    <property type="chains" value="N=1-485"/>
</dbReference>
<dbReference type="PDB" id="7P63">
    <property type="method" value="EM"/>
    <property type="resolution" value="3.40 A"/>
    <property type="chains" value="N=1-485"/>
</dbReference>
<dbReference type="PDB" id="7P64">
    <property type="method" value="EM"/>
    <property type="resolution" value="2.50 A"/>
    <property type="chains" value="N=1-485"/>
</dbReference>
<dbReference type="PDB" id="7P69">
    <property type="method" value="EM"/>
    <property type="resolution" value="3.00 A"/>
    <property type="chains" value="N=1-485"/>
</dbReference>
<dbReference type="PDB" id="7P7C">
    <property type="method" value="EM"/>
    <property type="resolution" value="2.40 A"/>
    <property type="chains" value="N=1-485"/>
</dbReference>
<dbReference type="PDB" id="7P7E">
    <property type="method" value="EM"/>
    <property type="resolution" value="2.70 A"/>
    <property type="chains" value="N=1-485"/>
</dbReference>
<dbReference type="PDB" id="7P7J">
    <property type="method" value="EM"/>
    <property type="resolution" value="2.70 A"/>
    <property type="chains" value="N=1-485"/>
</dbReference>
<dbReference type="PDB" id="7P7K">
    <property type="method" value="EM"/>
    <property type="resolution" value="3.10 A"/>
    <property type="chains" value="N=1-485"/>
</dbReference>
<dbReference type="PDB" id="7P7L">
    <property type="method" value="EM"/>
    <property type="resolution" value="3.00 A"/>
    <property type="chains" value="N=1-485"/>
</dbReference>
<dbReference type="PDB" id="7P7M">
    <property type="method" value="EM"/>
    <property type="resolution" value="3.20 A"/>
    <property type="chains" value="N=1-485"/>
</dbReference>
<dbReference type="PDB" id="7Z7R">
    <property type="method" value="EM"/>
    <property type="resolution" value="3.36 A"/>
    <property type="chains" value="N=1-485"/>
</dbReference>
<dbReference type="PDB" id="7Z7S">
    <property type="method" value="EM"/>
    <property type="resolution" value="2.40 A"/>
    <property type="chains" value="N=1-485"/>
</dbReference>
<dbReference type="PDB" id="7Z7T">
    <property type="method" value="EM"/>
    <property type="resolution" value="3.10 A"/>
    <property type="chains" value="N=1-485"/>
</dbReference>
<dbReference type="PDB" id="7Z7V">
    <property type="method" value="EM"/>
    <property type="resolution" value="2.29 A"/>
    <property type="chains" value="N=1-485"/>
</dbReference>
<dbReference type="PDB" id="7Z80">
    <property type="method" value="EM"/>
    <property type="resolution" value="2.93 A"/>
    <property type="chains" value="N=1-485"/>
</dbReference>
<dbReference type="PDB" id="7Z83">
    <property type="method" value="EM"/>
    <property type="resolution" value="2.88 A"/>
    <property type="chains" value="N=1-485"/>
</dbReference>
<dbReference type="PDB" id="7Z84">
    <property type="method" value="EM"/>
    <property type="resolution" value="2.87 A"/>
    <property type="chains" value="N=1-485"/>
</dbReference>
<dbReference type="PDB" id="7ZC5">
    <property type="method" value="EM"/>
    <property type="resolution" value="3.00 A"/>
    <property type="chains" value="N=1-485"/>
</dbReference>
<dbReference type="PDB" id="7ZCI">
    <property type="method" value="EM"/>
    <property type="resolution" value="2.69 A"/>
    <property type="chains" value="N=1-485"/>
</dbReference>
<dbReference type="PDBsum" id="7NYH"/>
<dbReference type="PDBsum" id="7NYR"/>
<dbReference type="PDBsum" id="7NYU"/>
<dbReference type="PDBsum" id="7NYV"/>
<dbReference type="PDBsum" id="7P61"/>
<dbReference type="PDBsum" id="7P62"/>
<dbReference type="PDBsum" id="7P63"/>
<dbReference type="PDBsum" id="7P64"/>
<dbReference type="PDBsum" id="7P69"/>
<dbReference type="PDBsum" id="7P7C"/>
<dbReference type="PDBsum" id="7P7E"/>
<dbReference type="PDBsum" id="7P7J"/>
<dbReference type="PDBsum" id="7P7K"/>
<dbReference type="PDBsum" id="7P7L"/>
<dbReference type="PDBsum" id="7P7M"/>
<dbReference type="PDBsum" id="7Z7R"/>
<dbReference type="PDBsum" id="7Z7S"/>
<dbReference type="PDBsum" id="7Z7T"/>
<dbReference type="PDBsum" id="7Z7V"/>
<dbReference type="PDBsum" id="7Z80"/>
<dbReference type="PDBsum" id="7Z83"/>
<dbReference type="PDBsum" id="7Z84"/>
<dbReference type="PDBsum" id="7ZC5"/>
<dbReference type="PDBsum" id="7ZCI"/>
<dbReference type="EMDB" id="EMD-12652"/>
<dbReference type="EMDB" id="EMD-12653"/>
<dbReference type="EMDB" id="EMD-12654"/>
<dbReference type="EMDB" id="EMD-12655"/>
<dbReference type="SMR" id="P0AFF0"/>
<dbReference type="BioGRID" id="4260885">
    <property type="interactions" value="54"/>
</dbReference>
<dbReference type="ComplexPortal" id="CPX-243">
    <property type="entry name" value="Respiratory chain complex I"/>
</dbReference>
<dbReference type="DIP" id="DIP-59256N"/>
<dbReference type="FunCoup" id="P0AFF0">
    <property type="interactions" value="193"/>
</dbReference>
<dbReference type="IntAct" id="P0AFF0">
    <property type="interactions" value="1"/>
</dbReference>
<dbReference type="STRING" id="511145.b2276"/>
<dbReference type="TCDB" id="3.D.1.1.1">
    <property type="family name" value="the h+ or na+-translocating nadh dehydrogenase (ndh) family"/>
</dbReference>
<dbReference type="jPOST" id="P0AFF0"/>
<dbReference type="PaxDb" id="511145-b2276"/>
<dbReference type="EnsemblBacteria" id="AAC75336">
    <property type="protein sequence ID" value="AAC75336"/>
    <property type="gene ID" value="b2276"/>
</dbReference>
<dbReference type="GeneID" id="75205678"/>
<dbReference type="GeneID" id="945136"/>
<dbReference type="KEGG" id="ecj:JW2271"/>
<dbReference type="KEGG" id="eco:b2276"/>
<dbReference type="KEGG" id="ecoc:C3026_12705"/>
<dbReference type="PATRIC" id="fig|1411691.4.peg.4460"/>
<dbReference type="EchoBASE" id="EB2017"/>
<dbReference type="eggNOG" id="COG1007">
    <property type="taxonomic scope" value="Bacteria"/>
</dbReference>
<dbReference type="HOGENOM" id="CLU_007100_1_5_6"/>
<dbReference type="InParanoid" id="P0AFF0"/>
<dbReference type="OMA" id="LMFFSEP"/>
<dbReference type="OrthoDB" id="9768329at2"/>
<dbReference type="PhylomeDB" id="P0AFF0"/>
<dbReference type="BioCyc" id="EcoCyc:NUON-MONOMER"/>
<dbReference type="BioCyc" id="MetaCyc:NUON-MONOMER"/>
<dbReference type="PRO" id="PR:P0AFF0"/>
<dbReference type="Proteomes" id="UP000000625">
    <property type="component" value="Chromosome"/>
</dbReference>
<dbReference type="GO" id="GO:0016020">
    <property type="term" value="C:membrane"/>
    <property type="evidence" value="ECO:0000314"/>
    <property type="project" value="ComplexPortal"/>
</dbReference>
<dbReference type="GO" id="GO:0030964">
    <property type="term" value="C:NADH dehydrogenase complex"/>
    <property type="evidence" value="ECO:0000314"/>
    <property type="project" value="EcoliWiki"/>
</dbReference>
<dbReference type="GO" id="GO:0005886">
    <property type="term" value="C:plasma membrane"/>
    <property type="evidence" value="ECO:0000314"/>
    <property type="project" value="EcoCyc"/>
</dbReference>
<dbReference type="GO" id="GO:0045271">
    <property type="term" value="C:respiratory chain complex I"/>
    <property type="evidence" value="ECO:0000314"/>
    <property type="project" value="EcoCyc"/>
</dbReference>
<dbReference type="GO" id="GO:0008137">
    <property type="term" value="F:NADH dehydrogenase (ubiquinone) activity"/>
    <property type="evidence" value="ECO:0007669"/>
    <property type="project" value="InterPro"/>
</dbReference>
<dbReference type="GO" id="GO:0050136">
    <property type="term" value="F:NADH:ubiquinone reductase (non-electrogenic) activity"/>
    <property type="evidence" value="ECO:0007669"/>
    <property type="project" value="UniProtKB-UniRule"/>
</dbReference>
<dbReference type="GO" id="GO:0048038">
    <property type="term" value="F:quinone binding"/>
    <property type="evidence" value="ECO:0007669"/>
    <property type="project" value="UniProtKB-KW"/>
</dbReference>
<dbReference type="GO" id="GO:0009060">
    <property type="term" value="P:aerobic respiration"/>
    <property type="evidence" value="ECO:0000315"/>
    <property type="project" value="EcoCyc"/>
</dbReference>
<dbReference type="GO" id="GO:0042773">
    <property type="term" value="P:ATP synthesis coupled electron transport"/>
    <property type="evidence" value="ECO:0007669"/>
    <property type="project" value="InterPro"/>
</dbReference>
<dbReference type="GO" id="GO:0015990">
    <property type="term" value="P:electron transport coupled proton transport"/>
    <property type="evidence" value="ECO:0000315"/>
    <property type="project" value="EcoCyc"/>
</dbReference>
<dbReference type="GO" id="GO:0022904">
    <property type="term" value="P:respiratory electron transport chain"/>
    <property type="evidence" value="ECO:0000314"/>
    <property type="project" value="ComplexPortal"/>
</dbReference>
<dbReference type="HAMAP" id="MF_00445">
    <property type="entry name" value="NDH1_NuoN_1"/>
    <property type="match status" value="1"/>
</dbReference>
<dbReference type="InterPro" id="IPR010096">
    <property type="entry name" value="NADH-Q_OxRdtase_suN/2"/>
</dbReference>
<dbReference type="InterPro" id="IPR001750">
    <property type="entry name" value="ND/Mrp_TM"/>
</dbReference>
<dbReference type="NCBIfam" id="TIGR01770">
    <property type="entry name" value="NDH_I_N"/>
    <property type="match status" value="1"/>
</dbReference>
<dbReference type="NCBIfam" id="NF004439">
    <property type="entry name" value="PRK05777.1-1"/>
    <property type="match status" value="1"/>
</dbReference>
<dbReference type="PANTHER" id="PTHR22773">
    <property type="entry name" value="NADH DEHYDROGENASE"/>
    <property type="match status" value="1"/>
</dbReference>
<dbReference type="Pfam" id="PF00361">
    <property type="entry name" value="Proton_antipo_M"/>
    <property type="match status" value="1"/>
</dbReference>
<accession>P0AFF0</accession>
<accession>P33608</accession>
<accession>P78281</accession>
<organism>
    <name type="scientific">Escherichia coli (strain K12)</name>
    <dbReference type="NCBI Taxonomy" id="83333"/>
    <lineage>
        <taxon>Bacteria</taxon>
        <taxon>Pseudomonadati</taxon>
        <taxon>Pseudomonadota</taxon>
        <taxon>Gammaproteobacteria</taxon>
        <taxon>Enterobacterales</taxon>
        <taxon>Enterobacteriaceae</taxon>
        <taxon>Escherichia</taxon>
    </lineage>
</organism>
<comment type="function">
    <text>NDH-1 shuttles electrons from NADH, via FMN and iron-sulfur (Fe-S) centers, to quinones in the respiratory chain. The immediate electron acceptor for the enzyme in this species is believed to be ubiquinone. Couples the redox reaction to proton translocation (for every two electrons transferred, four hydrogen ions are translocated across the cytoplasmic membrane), and thus conserves the redox energy in a proton gradient.</text>
</comment>
<comment type="catalytic activity">
    <reaction evidence="2">
        <text>a quinone + NADH + 5 H(+)(in) = a quinol + NAD(+) + 4 H(+)(out)</text>
        <dbReference type="Rhea" id="RHEA:57888"/>
        <dbReference type="ChEBI" id="CHEBI:15378"/>
        <dbReference type="ChEBI" id="CHEBI:24646"/>
        <dbReference type="ChEBI" id="CHEBI:57540"/>
        <dbReference type="ChEBI" id="CHEBI:57945"/>
        <dbReference type="ChEBI" id="CHEBI:132124"/>
    </reaction>
</comment>
<comment type="subunit">
    <text>NDH-1 is composed of 13 different subunits. Subunits NuoA, H, J, K, L, M, N constitute the membrane sector of the complex.</text>
</comment>
<comment type="subcellular location">
    <subcellularLocation>
        <location>Cell inner membrane</location>
        <topology>Multi-pass membrane protein</topology>
    </subcellularLocation>
</comment>
<comment type="disruption phenotype">
    <text evidence="3">Cells gene grow very poorly on M65 minimal medium containing acetate but normally on rich medium (LB).</text>
</comment>
<comment type="miscellaneous">
    <text>A construct which produces a protein lacking the first amino acids has only 5% of the wild-type rate of deamino-NADH oxidase.</text>
</comment>
<comment type="similarity">
    <text evidence="2">Belongs to the complex I subunit 2 family.</text>
</comment>
<comment type="sequence caution" evidence="4">
    <conflict type="erroneous initiation">
        <sequence resource="EMBL-CDS" id="BAA16103"/>
    </conflict>
</comment>
<comment type="sequence caution" evidence="4">
    <conflict type="erroneous initiation">
        <sequence resource="EMBL-CDS" id="CAA48373"/>
    </conflict>
</comment>